<comment type="function">
    <text evidence="1">Plays a role in cell envelope biogenesis, maintenance of cell envelope integrity and membrane homeostasis.</text>
</comment>
<comment type="subcellular location">
    <subcellularLocation>
        <location evidence="1">Cell inner membrane</location>
        <topology evidence="1">Multi-pass membrane protein</topology>
    </subcellularLocation>
</comment>
<comment type="similarity">
    <text evidence="1">Belongs to the YciB family.</text>
</comment>
<evidence type="ECO:0000255" key="1">
    <source>
        <dbReference type="HAMAP-Rule" id="MF_00189"/>
    </source>
</evidence>
<proteinExistence type="inferred from homology"/>
<keyword id="KW-0997">Cell inner membrane</keyword>
<keyword id="KW-1003">Cell membrane</keyword>
<keyword id="KW-0472">Membrane</keyword>
<keyword id="KW-0812">Transmembrane</keyword>
<keyword id="KW-1133">Transmembrane helix</keyword>
<accession>A8GF88</accession>
<sequence>MKQFLDFLPLIVFFAFYKLYDIYVASGALIVATALALVFTWFKYRKIEKMTLITFLMVLVFGTLTLVFHNDLFIKWKVTIIYTLFALALLISQLVLKKPLVQRMLGKELTLPDKVWNSLNLAWAVFFLVCGLANIYVAFWLPQSVWVNFKVFGLTALTLVFTLLSGVYIYRHMPEEQKK</sequence>
<feature type="chain" id="PRO_1000058477" description="Inner membrane-spanning protein YciB">
    <location>
        <begin position="1"/>
        <end position="179"/>
    </location>
</feature>
<feature type="transmembrane region" description="Helical" evidence="1">
    <location>
        <begin position="22"/>
        <end position="42"/>
    </location>
</feature>
<feature type="transmembrane region" description="Helical" evidence="1">
    <location>
        <begin position="50"/>
        <end position="70"/>
    </location>
</feature>
<feature type="transmembrane region" description="Helical" evidence="1">
    <location>
        <begin position="76"/>
        <end position="96"/>
    </location>
</feature>
<feature type="transmembrane region" description="Helical" evidence="1">
    <location>
        <begin position="121"/>
        <end position="141"/>
    </location>
</feature>
<feature type="transmembrane region" description="Helical" evidence="1">
    <location>
        <begin position="149"/>
        <end position="169"/>
    </location>
</feature>
<dbReference type="EMBL" id="CP000826">
    <property type="protein sequence ID" value="ABV41778.1"/>
    <property type="molecule type" value="Genomic_DNA"/>
</dbReference>
<dbReference type="STRING" id="399741.Spro_2677"/>
<dbReference type="KEGG" id="spe:Spro_2677"/>
<dbReference type="eggNOG" id="COG2917">
    <property type="taxonomic scope" value="Bacteria"/>
</dbReference>
<dbReference type="HOGENOM" id="CLU_089554_2_0_6"/>
<dbReference type="OrthoDB" id="9788219at2"/>
<dbReference type="GO" id="GO:0005886">
    <property type="term" value="C:plasma membrane"/>
    <property type="evidence" value="ECO:0007669"/>
    <property type="project" value="UniProtKB-SubCell"/>
</dbReference>
<dbReference type="HAMAP" id="MF_00189">
    <property type="entry name" value="YciB"/>
    <property type="match status" value="1"/>
</dbReference>
<dbReference type="InterPro" id="IPR006008">
    <property type="entry name" value="YciB"/>
</dbReference>
<dbReference type="NCBIfam" id="TIGR00997">
    <property type="entry name" value="ispZ"/>
    <property type="match status" value="1"/>
</dbReference>
<dbReference type="NCBIfam" id="NF001324">
    <property type="entry name" value="PRK00259.1-2"/>
    <property type="match status" value="1"/>
</dbReference>
<dbReference type="NCBIfam" id="NF001325">
    <property type="entry name" value="PRK00259.1-3"/>
    <property type="match status" value="1"/>
</dbReference>
<dbReference type="NCBIfam" id="NF001326">
    <property type="entry name" value="PRK00259.1-4"/>
    <property type="match status" value="1"/>
</dbReference>
<dbReference type="PANTHER" id="PTHR36917:SF1">
    <property type="entry name" value="INNER MEMBRANE-SPANNING PROTEIN YCIB"/>
    <property type="match status" value="1"/>
</dbReference>
<dbReference type="PANTHER" id="PTHR36917">
    <property type="entry name" value="INTRACELLULAR SEPTATION PROTEIN A-RELATED"/>
    <property type="match status" value="1"/>
</dbReference>
<dbReference type="Pfam" id="PF04279">
    <property type="entry name" value="IspA"/>
    <property type="match status" value="1"/>
</dbReference>
<reference key="1">
    <citation type="submission" date="2007-09" db="EMBL/GenBank/DDBJ databases">
        <title>Complete sequence of chromosome of Serratia proteamaculans 568.</title>
        <authorList>
            <consortium name="US DOE Joint Genome Institute"/>
            <person name="Copeland A."/>
            <person name="Lucas S."/>
            <person name="Lapidus A."/>
            <person name="Barry K."/>
            <person name="Glavina del Rio T."/>
            <person name="Dalin E."/>
            <person name="Tice H."/>
            <person name="Pitluck S."/>
            <person name="Chain P."/>
            <person name="Malfatti S."/>
            <person name="Shin M."/>
            <person name="Vergez L."/>
            <person name="Schmutz J."/>
            <person name="Larimer F."/>
            <person name="Land M."/>
            <person name="Hauser L."/>
            <person name="Kyrpides N."/>
            <person name="Kim E."/>
            <person name="Taghavi S."/>
            <person name="Newman L."/>
            <person name="Vangronsveld J."/>
            <person name="van der Lelie D."/>
            <person name="Richardson P."/>
        </authorList>
    </citation>
    <scope>NUCLEOTIDE SEQUENCE [LARGE SCALE GENOMIC DNA]</scope>
    <source>
        <strain>568</strain>
    </source>
</reference>
<protein>
    <recommendedName>
        <fullName evidence="1">Inner membrane-spanning protein YciB</fullName>
    </recommendedName>
</protein>
<gene>
    <name evidence="1" type="primary">yciB</name>
    <name type="ordered locus">Spro_2677</name>
</gene>
<organism>
    <name type="scientific">Serratia proteamaculans (strain 568)</name>
    <dbReference type="NCBI Taxonomy" id="399741"/>
    <lineage>
        <taxon>Bacteria</taxon>
        <taxon>Pseudomonadati</taxon>
        <taxon>Pseudomonadota</taxon>
        <taxon>Gammaproteobacteria</taxon>
        <taxon>Enterobacterales</taxon>
        <taxon>Yersiniaceae</taxon>
        <taxon>Serratia</taxon>
    </lineage>
</organism>
<name>YCIB_SERP5</name>